<keyword id="KW-0002">3D-structure</keyword>
<keyword id="KW-0012">Acyltransferase</keyword>
<keyword id="KW-1185">Reference proteome</keyword>
<keyword id="KW-0808">Transferase</keyword>
<feature type="chain" id="PRO_0000433351" description="Acetyltransferase Atu2258">
    <location>
        <begin position="1"/>
        <end position="137"/>
    </location>
</feature>
<feature type="domain" description="N-acetyltransferase" evidence="2">
    <location>
        <begin position="1"/>
        <end position="137"/>
    </location>
</feature>
<feature type="binding site" evidence="1">
    <location>
        <begin position="66"/>
        <end position="68"/>
    </location>
    <ligand>
        <name>CoA</name>
        <dbReference type="ChEBI" id="CHEBI:57287"/>
    </ligand>
</feature>
<feature type="binding site" evidence="1">
    <location>
        <position position="74"/>
    </location>
    <ligand>
        <name>CoA</name>
        <dbReference type="ChEBI" id="CHEBI:57287"/>
    </ligand>
</feature>
<feature type="binding site" evidence="1">
    <location>
        <begin position="108"/>
        <end position="110"/>
    </location>
    <ligand>
        <name>CoA</name>
        <dbReference type="ChEBI" id="CHEBI:57287"/>
    </ligand>
</feature>
<feature type="helix" evidence="5">
    <location>
        <begin position="11"/>
        <end position="29"/>
    </location>
</feature>
<feature type="strand" evidence="5">
    <location>
        <begin position="35"/>
        <end position="42"/>
    </location>
</feature>
<feature type="strand" evidence="5">
    <location>
        <begin position="48"/>
        <end position="57"/>
    </location>
</feature>
<feature type="strand" evidence="5">
    <location>
        <begin position="60"/>
        <end position="67"/>
    </location>
</feature>
<feature type="helix" evidence="5">
    <location>
        <begin position="70"/>
        <end position="72"/>
    </location>
</feature>
<feature type="strand" evidence="5">
    <location>
        <begin position="74"/>
        <end position="76"/>
    </location>
</feature>
<feature type="helix" evidence="5">
    <location>
        <begin position="77"/>
        <end position="91"/>
    </location>
</feature>
<feature type="strand" evidence="5">
    <location>
        <begin position="96"/>
        <end position="102"/>
    </location>
</feature>
<feature type="helix" evidence="5">
    <location>
        <begin position="104"/>
        <end position="113"/>
    </location>
</feature>
<feature type="strand" evidence="5">
    <location>
        <begin position="116"/>
        <end position="121"/>
    </location>
</feature>
<feature type="strand" evidence="5">
    <location>
        <begin position="130"/>
        <end position="136"/>
    </location>
</feature>
<protein>
    <recommendedName>
        <fullName evidence="4">Acetyltransferase Atu2258</fullName>
        <ecNumber>2.3.1.-</ecNumber>
    </recommendedName>
    <alternativeName>
        <fullName evidence="4">GCN5-related N-acetyltransferase</fullName>
        <shortName evidence="4">GNAT</shortName>
    </alternativeName>
</protein>
<gene>
    <name type="ordered locus">Atu2258</name>
</gene>
<reference key="1">
    <citation type="journal article" date="2001" name="Science">
        <title>The genome of the natural genetic engineer Agrobacterium tumefaciens C58.</title>
        <authorList>
            <person name="Wood D.W."/>
            <person name="Setubal J.C."/>
            <person name="Kaul R."/>
            <person name="Monks D.E."/>
            <person name="Kitajima J.P."/>
            <person name="Okura V.K."/>
            <person name="Zhou Y."/>
            <person name="Chen L."/>
            <person name="Wood G.E."/>
            <person name="Almeida N.F. Jr."/>
            <person name="Woo L."/>
            <person name="Chen Y."/>
            <person name="Paulsen I.T."/>
            <person name="Eisen J.A."/>
            <person name="Karp P.D."/>
            <person name="Bovee D. Sr."/>
            <person name="Chapman P."/>
            <person name="Clendenning J."/>
            <person name="Deatherage G."/>
            <person name="Gillet W."/>
            <person name="Grant C."/>
            <person name="Kutyavin T."/>
            <person name="Levy R."/>
            <person name="Li M.-J."/>
            <person name="McClelland E."/>
            <person name="Palmieri A."/>
            <person name="Raymond C."/>
            <person name="Rouse G."/>
            <person name="Saenphimmachak C."/>
            <person name="Wu Z."/>
            <person name="Romero P."/>
            <person name="Gordon D."/>
            <person name="Zhang S."/>
            <person name="Yoo H."/>
            <person name="Tao Y."/>
            <person name="Biddle P."/>
            <person name="Jung M."/>
            <person name="Krespan W."/>
            <person name="Perry M."/>
            <person name="Gordon-Kamm B."/>
            <person name="Liao L."/>
            <person name="Kim S."/>
            <person name="Hendrick C."/>
            <person name="Zhao Z.-Y."/>
            <person name="Dolan M."/>
            <person name="Chumley F."/>
            <person name="Tingey S.V."/>
            <person name="Tomb J.-F."/>
            <person name="Gordon M.P."/>
            <person name="Olson M.V."/>
            <person name="Nester E.W."/>
        </authorList>
    </citation>
    <scope>NUCLEOTIDE SEQUENCE [LARGE SCALE GENOMIC DNA]</scope>
    <source>
        <strain>C58 / ATCC 33970</strain>
    </source>
</reference>
<reference key="2">
    <citation type="journal article" date="2001" name="Science">
        <title>Genome sequence of the plant pathogen and biotechnology agent Agrobacterium tumefaciens C58.</title>
        <authorList>
            <person name="Goodner B."/>
            <person name="Hinkle G."/>
            <person name="Gattung S."/>
            <person name="Miller N."/>
            <person name="Blanchard M."/>
            <person name="Qurollo B."/>
            <person name="Goldman B.S."/>
            <person name="Cao Y."/>
            <person name="Askenazi M."/>
            <person name="Halling C."/>
            <person name="Mullin L."/>
            <person name="Houmiel K."/>
            <person name="Gordon J."/>
            <person name="Vaudin M."/>
            <person name="Iartchouk O."/>
            <person name="Epp A."/>
            <person name="Liu F."/>
            <person name="Wollam C."/>
            <person name="Allinger M."/>
            <person name="Doughty D."/>
            <person name="Scott C."/>
            <person name="Lappas C."/>
            <person name="Markelz B."/>
            <person name="Flanagan C."/>
            <person name="Crowell C."/>
            <person name="Gurson J."/>
            <person name="Lomo C."/>
            <person name="Sear C."/>
            <person name="Strub G."/>
            <person name="Cielo C."/>
            <person name="Slater S."/>
        </authorList>
    </citation>
    <scope>NUCLEOTIDE SEQUENCE [LARGE SCALE GENOMIC DNA]</scope>
    <source>
        <strain>C58 / ATCC 33970</strain>
    </source>
</reference>
<reference key="3">
    <citation type="journal article" date="2013" name="Protein Sci.">
        <title>Broad-substrate screen as a tool to identify substrates for bacterial Gcn5-related N-acetyltransferases with unknown substrate specificity.</title>
        <authorList>
            <person name="Kuhn M.L."/>
            <person name="Majorek K.A."/>
            <person name="Minor W."/>
            <person name="Anderson W.F."/>
        </authorList>
    </citation>
    <scope>FUNCTION</scope>
    <scope>SUBSTRATE SPECIFICITY</scope>
    <source>
        <strain>C58 / ATCC 33970</strain>
    </source>
</reference>
<reference key="4">
    <citation type="submission" date="2006-02" db="PDB data bank">
        <title>Crystal structure of putative acetyltransferase from Agrobacterium tumefaciens.</title>
        <authorList>
            <consortium name="Midwest center for structural genomics (MCSG)"/>
        </authorList>
    </citation>
    <scope>X-RAY CRYSTALLOGRAPHY (1.90 ANGSTROMS)</scope>
</reference>
<dbReference type="EC" id="2.3.1.-"/>
<dbReference type="EMBL" id="AE007869">
    <property type="protein sequence ID" value="AAK87999.2"/>
    <property type="molecule type" value="Genomic_DNA"/>
</dbReference>
<dbReference type="RefSeq" id="NP_355214.2">
    <property type="nucleotide sequence ID" value="NC_003062.2"/>
</dbReference>
<dbReference type="RefSeq" id="WP_010972179.1">
    <property type="nucleotide sequence ID" value="NC_003062.2"/>
</dbReference>
<dbReference type="PDB" id="2G3A">
    <property type="method" value="X-ray"/>
    <property type="resolution" value="1.90 A"/>
    <property type="chains" value="A=1-137"/>
</dbReference>
<dbReference type="PDBsum" id="2G3A"/>
<dbReference type="SMR" id="Q7CXI0"/>
<dbReference type="STRING" id="176299.Atu2258"/>
<dbReference type="EnsemblBacteria" id="AAK87999">
    <property type="protein sequence ID" value="AAK87999"/>
    <property type="gene ID" value="Atu2258"/>
</dbReference>
<dbReference type="GeneID" id="1134296"/>
<dbReference type="KEGG" id="atu:Atu2258"/>
<dbReference type="PATRIC" id="fig|176299.10.peg.2268"/>
<dbReference type="eggNOG" id="COG0454">
    <property type="taxonomic scope" value="Bacteria"/>
</dbReference>
<dbReference type="HOGENOM" id="CLU_115862_2_0_5"/>
<dbReference type="OrthoDB" id="9787920at2"/>
<dbReference type="PhylomeDB" id="Q7CXI0"/>
<dbReference type="BioCyc" id="AGRO:ATU2258-MONOMER"/>
<dbReference type="EvolutionaryTrace" id="Q7CXI0"/>
<dbReference type="Proteomes" id="UP000000813">
    <property type="component" value="Chromosome circular"/>
</dbReference>
<dbReference type="GO" id="GO:0016747">
    <property type="term" value="F:acyltransferase activity, transferring groups other than amino-acyl groups"/>
    <property type="evidence" value="ECO:0000314"/>
    <property type="project" value="UniProtKB"/>
</dbReference>
<dbReference type="CDD" id="cd04301">
    <property type="entry name" value="NAT_SF"/>
    <property type="match status" value="1"/>
</dbReference>
<dbReference type="FunFam" id="3.40.630.30:FF:000145">
    <property type="entry name" value="Acetyltransferase Atu2258"/>
    <property type="match status" value="1"/>
</dbReference>
<dbReference type="Gene3D" id="3.40.630.30">
    <property type="match status" value="1"/>
</dbReference>
<dbReference type="Gene3D" id="1.20.5.540">
    <property type="entry name" value="Single helix bin"/>
    <property type="match status" value="1"/>
</dbReference>
<dbReference type="InterPro" id="IPR016181">
    <property type="entry name" value="Acyl_CoA_acyltransferase"/>
</dbReference>
<dbReference type="InterPro" id="IPR000182">
    <property type="entry name" value="GNAT_dom"/>
</dbReference>
<dbReference type="InterPro" id="IPR050680">
    <property type="entry name" value="YpeA/RimI_acetyltransf"/>
</dbReference>
<dbReference type="PANTHER" id="PTHR43420">
    <property type="entry name" value="ACETYLTRANSFERASE"/>
    <property type="match status" value="1"/>
</dbReference>
<dbReference type="Pfam" id="PF00583">
    <property type="entry name" value="Acetyltransf_1"/>
    <property type="match status" value="1"/>
</dbReference>
<dbReference type="SUPFAM" id="SSF55729">
    <property type="entry name" value="Acyl-CoA N-acyltransferases (Nat)"/>
    <property type="match status" value="1"/>
</dbReference>
<dbReference type="PROSITE" id="PS51186">
    <property type="entry name" value="GNAT"/>
    <property type="match status" value="1"/>
</dbReference>
<comment type="function">
    <text evidence="3">Catalyzes the transfer of an acetyl group from acetyl coenzyme A (AcCoA) to an acceptor substrate and releases both CoA and the acetylated product. It prefers glucosamine 6-phosphate or dopamine. It can also use the thialysine, N(8)-acetylspermidine, chloramphenicol, puromycin, polymyxin B, and 4-aminobutyrate ethyl ester.</text>
</comment>
<accession>Q7CXI0</accession>
<sequence>MNFVLSDVADAEAEKAIRDPLVAYNLARFGESDKRDLNITIRNDDNSVTGGLVGHTARGWLYVQLLFVPEAMRGQGIAPKLLAMAEEEARKRGCMGAYIDTMNPDALRTYERYGFTKIGSLGPLSSGQSITWLEKRF</sequence>
<name>ATSE_AGRFC</name>
<proteinExistence type="evidence at protein level"/>
<organism>
    <name type="scientific">Agrobacterium fabrum (strain C58 / ATCC 33970)</name>
    <name type="common">Agrobacterium tumefaciens (strain C58)</name>
    <dbReference type="NCBI Taxonomy" id="176299"/>
    <lineage>
        <taxon>Bacteria</taxon>
        <taxon>Pseudomonadati</taxon>
        <taxon>Pseudomonadota</taxon>
        <taxon>Alphaproteobacteria</taxon>
        <taxon>Hyphomicrobiales</taxon>
        <taxon>Rhizobiaceae</taxon>
        <taxon>Rhizobium/Agrobacterium group</taxon>
        <taxon>Agrobacterium</taxon>
        <taxon>Agrobacterium tumefaciens complex</taxon>
    </lineage>
</organism>
<evidence type="ECO:0000250" key="1">
    <source>
        <dbReference type="UniProtKB" id="Q9I0Q8"/>
    </source>
</evidence>
<evidence type="ECO:0000255" key="2">
    <source>
        <dbReference type="PROSITE-ProRule" id="PRU00532"/>
    </source>
</evidence>
<evidence type="ECO:0000269" key="3">
    <source>
    </source>
</evidence>
<evidence type="ECO:0000303" key="4">
    <source>
    </source>
</evidence>
<evidence type="ECO:0007829" key="5">
    <source>
        <dbReference type="PDB" id="2G3A"/>
    </source>
</evidence>